<reference key="1">
    <citation type="journal article" date="2000" name="Biochem. Biophys. Res. Commun.">
        <title>Characterization of five novel human genes in the 11q13-q22 region.</title>
        <authorList>
            <person name="O'Brien K.P."/>
            <person name="Tapia-Paez I."/>
            <person name="Staahle-Baeckdahl M."/>
            <person name="Kedra D."/>
            <person name="Dumanski J.P."/>
        </authorList>
    </citation>
    <scope>NUCLEOTIDE SEQUENCE [MRNA]</scope>
</reference>
<reference key="2">
    <citation type="journal article" date="2005" name="Science">
        <title>The transcriptional landscape of the mammalian genome.</title>
        <authorList>
            <person name="Carninci P."/>
            <person name="Kasukawa T."/>
            <person name="Katayama S."/>
            <person name="Gough J."/>
            <person name="Frith M.C."/>
            <person name="Maeda N."/>
            <person name="Oyama R."/>
            <person name="Ravasi T."/>
            <person name="Lenhard B."/>
            <person name="Wells C."/>
            <person name="Kodzius R."/>
            <person name="Shimokawa K."/>
            <person name="Bajic V.B."/>
            <person name="Brenner S.E."/>
            <person name="Batalov S."/>
            <person name="Forrest A.R."/>
            <person name="Zavolan M."/>
            <person name="Davis M.J."/>
            <person name="Wilming L.G."/>
            <person name="Aidinis V."/>
            <person name="Allen J.E."/>
            <person name="Ambesi-Impiombato A."/>
            <person name="Apweiler R."/>
            <person name="Aturaliya R.N."/>
            <person name="Bailey T.L."/>
            <person name="Bansal M."/>
            <person name="Baxter L."/>
            <person name="Beisel K.W."/>
            <person name="Bersano T."/>
            <person name="Bono H."/>
            <person name="Chalk A.M."/>
            <person name="Chiu K.P."/>
            <person name="Choudhary V."/>
            <person name="Christoffels A."/>
            <person name="Clutterbuck D.R."/>
            <person name="Crowe M.L."/>
            <person name="Dalla E."/>
            <person name="Dalrymple B.P."/>
            <person name="de Bono B."/>
            <person name="Della Gatta G."/>
            <person name="di Bernardo D."/>
            <person name="Down T."/>
            <person name="Engstrom P."/>
            <person name="Fagiolini M."/>
            <person name="Faulkner G."/>
            <person name="Fletcher C.F."/>
            <person name="Fukushima T."/>
            <person name="Furuno M."/>
            <person name="Futaki S."/>
            <person name="Gariboldi M."/>
            <person name="Georgii-Hemming P."/>
            <person name="Gingeras T.R."/>
            <person name="Gojobori T."/>
            <person name="Green R.E."/>
            <person name="Gustincich S."/>
            <person name="Harbers M."/>
            <person name="Hayashi Y."/>
            <person name="Hensch T.K."/>
            <person name="Hirokawa N."/>
            <person name="Hill D."/>
            <person name="Huminiecki L."/>
            <person name="Iacono M."/>
            <person name="Ikeo K."/>
            <person name="Iwama A."/>
            <person name="Ishikawa T."/>
            <person name="Jakt M."/>
            <person name="Kanapin A."/>
            <person name="Katoh M."/>
            <person name="Kawasawa Y."/>
            <person name="Kelso J."/>
            <person name="Kitamura H."/>
            <person name="Kitano H."/>
            <person name="Kollias G."/>
            <person name="Krishnan S.P."/>
            <person name="Kruger A."/>
            <person name="Kummerfeld S.K."/>
            <person name="Kurochkin I.V."/>
            <person name="Lareau L.F."/>
            <person name="Lazarevic D."/>
            <person name="Lipovich L."/>
            <person name="Liu J."/>
            <person name="Liuni S."/>
            <person name="McWilliam S."/>
            <person name="Madan Babu M."/>
            <person name="Madera M."/>
            <person name="Marchionni L."/>
            <person name="Matsuda H."/>
            <person name="Matsuzawa S."/>
            <person name="Miki H."/>
            <person name="Mignone F."/>
            <person name="Miyake S."/>
            <person name="Morris K."/>
            <person name="Mottagui-Tabar S."/>
            <person name="Mulder N."/>
            <person name="Nakano N."/>
            <person name="Nakauchi H."/>
            <person name="Ng P."/>
            <person name="Nilsson R."/>
            <person name="Nishiguchi S."/>
            <person name="Nishikawa S."/>
            <person name="Nori F."/>
            <person name="Ohara O."/>
            <person name="Okazaki Y."/>
            <person name="Orlando V."/>
            <person name="Pang K.C."/>
            <person name="Pavan W.J."/>
            <person name="Pavesi G."/>
            <person name="Pesole G."/>
            <person name="Petrovsky N."/>
            <person name="Piazza S."/>
            <person name="Reed J."/>
            <person name="Reid J.F."/>
            <person name="Ring B.Z."/>
            <person name="Ringwald M."/>
            <person name="Rost B."/>
            <person name="Ruan Y."/>
            <person name="Salzberg S.L."/>
            <person name="Sandelin A."/>
            <person name="Schneider C."/>
            <person name="Schoenbach C."/>
            <person name="Sekiguchi K."/>
            <person name="Semple C.A."/>
            <person name="Seno S."/>
            <person name="Sessa L."/>
            <person name="Sheng Y."/>
            <person name="Shibata Y."/>
            <person name="Shimada H."/>
            <person name="Shimada K."/>
            <person name="Silva D."/>
            <person name="Sinclair B."/>
            <person name="Sperling S."/>
            <person name="Stupka E."/>
            <person name="Sugiura K."/>
            <person name="Sultana R."/>
            <person name="Takenaka Y."/>
            <person name="Taki K."/>
            <person name="Tammoja K."/>
            <person name="Tan S.L."/>
            <person name="Tang S."/>
            <person name="Taylor M.S."/>
            <person name="Tegner J."/>
            <person name="Teichmann S.A."/>
            <person name="Ueda H.R."/>
            <person name="van Nimwegen E."/>
            <person name="Verardo R."/>
            <person name="Wei C.L."/>
            <person name="Yagi K."/>
            <person name="Yamanishi H."/>
            <person name="Zabarovsky E."/>
            <person name="Zhu S."/>
            <person name="Zimmer A."/>
            <person name="Hide W."/>
            <person name="Bult C."/>
            <person name="Grimmond S.M."/>
            <person name="Teasdale R.D."/>
            <person name="Liu E.T."/>
            <person name="Brusic V."/>
            <person name="Quackenbush J."/>
            <person name="Wahlestedt C."/>
            <person name="Mattick J.S."/>
            <person name="Hume D.A."/>
            <person name="Kai C."/>
            <person name="Sasaki D."/>
            <person name="Tomaru Y."/>
            <person name="Fukuda S."/>
            <person name="Kanamori-Katayama M."/>
            <person name="Suzuki M."/>
            <person name="Aoki J."/>
            <person name="Arakawa T."/>
            <person name="Iida J."/>
            <person name="Imamura K."/>
            <person name="Itoh M."/>
            <person name="Kato T."/>
            <person name="Kawaji H."/>
            <person name="Kawagashira N."/>
            <person name="Kawashima T."/>
            <person name="Kojima M."/>
            <person name="Kondo S."/>
            <person name="Konno H."/>
            <person name="Nakano K."/>
            <person name="Ninomiya N."/>
            <person name="Nishio T."/>
            <person name="Okada M."/>
            <person name="Plessy C."/>
            <person name="Shibata K."/>
            <person name="Shiraki T."/>
            <person name="Suzuki S."/>
            <person name="Tagami M."/>
            <person name="Waki K."/>
            <person name="Watahiki A."/>
            <person name="Okamura-Oho Y."/>
            <person name="Suzuki H."/>
            <person name="Kawai J."/>
            <person name="Hayashizaki Y."/>
        </authorList>
    </citation>
    <scope>NUCLEOTIDE SEQUENCE [LARGE SCALE MRNA]</scope>
    <source>
        <strain>C57BL/6J</strain>
        <tissue>Cerebellum</tissue>
        <tissue>Wolffian duct</tissue>
    </source>
</reference>
<reference key="3">
    <citation type="journal article" date="2004" name="Genome Res.">
        <title>The status, quality, and expansion of the NIH full-length cDNA project: the Mammalian Gene Collection (MGC).</title>
        <authorList>
            <consortium name="The MGC Project Team"/>
        </authorList>
    </citation>
    <scope>NUCLEOTIDE SEQUENCE [LARGE SCALE MRNA]</scope>
    <source>
        <strain>FVB/N</strain>
        <strain>FVB/N-3</strain>
        <tissue>Mammary tumor</tissue>
    </source>
</reference>
<reference key="4">
    <citation type="journal article" date="2007" name="J. Biol. Chem.">
        <title>Knockdown of the intraflagellar transport protein IFT46 stimulates selective gene expression in mouse chondrocytes and affects early development in zebrafish.</title>
        <authorList>
            <person name="Gouttenoire J."/>
            <person name="Valcourt U."/>
            <person name="Bougault C."/>
            <person name="Aubert-Foucher E."/>
            <person name="Arnaud E."/>
            <person name="Giraud L."/>
            <person name="Mallein-Gerin F."/>
        </authorList>
    </citation>
    <scope>FUNCTION</scope>
    <scope>SUBCELLULAR LOCATION</scope>
    <scope>TISSUE SPECIFICITY</scope>
    <scope>DEVELOPMENTAL STAGE</scope>
    <scope>INDUCTION</scope>
</reference>
<reference key="5">
    <citation type="journal article" date="2007" name="J. Cell Biol.">
        <title>Functional analysis of an individual IFT protein: IFT46 is required for transport of outer dynein arms into flagella.</title>
        <authorList>
            <person name="Hou Y."/>
            <person name="Qin H."/>
            <person name="Follit J.A."/>
            <person name="Pazour G.J."/>
            <person name="Rosenbaum J.L."/>
            <person name="Witman G.B."/>
        </authorList>
    </citation>
    <scope>SUBUNIT</scope>
    <scope>SUBCELLULAR LOCATION</scope>
</reference>
<reference key="6">
    <citation type="journal article" date="2008" name="J. Cell Biol.">
        <title>ODA16 aids axonemal outer row dynein assembly through an interaction with the intraflagellar transport machinery.</title>
        <authorList>
            <person name="Ahmed N.T."/>
            <person name="Gao C."/>
            <person name="Lucker B.F."/>
            <person name="Cole D.G."/>
            <person name="Mitchell D.R."/>
        </authorList>
    </citation>
    <scope>INTERACTION WITH DAW1</scope>
</reference>
<reference key="7">
    <citation type="journal article" date="2009" name="Cell Motil. Cytoskeleton">
        <title>Characterization of mouse IFT complex B.</title>
        <authorList>
            <person name="Follit J.A."/>
            <person name="Xu F."/>
            <person name="Keady B.T."/>
            <person name="Pazour G.J."/>
        </authorList>
    </citation>
    <scope>IDENTIFICATION IN THE IFT COMPLEX B</scope>
    <scope>INTERACTION WITH IFT88</scope>
    <scope>SUBCELLULAR LOCATION</scope>
</reference>
<reference key="8">
    <citation type="journal article" date="2010" name="Cell">
        <title>A tissue-specific atlas of mouse protein phosphorylation and expression.</title>
        <authorList>
            <person name="Huttlin E.L."/>
            <person name="Jedrychowski M.P."/>
            <person name="Elias J.E."/>
            <person name="Goswami T."/>
            <person name="Rad R."/>
            <person name="Beausoleil S.A."/>
            <person name="Villen J."/>
            <person name="Haas W."/>
            <person name="Sowa M.E."/>
            <person name="Gygi S.P."/>
        </authorList>
    </citation>
    <scope>PHOSPHORYLATION [LARGE SCALE ANALYSIS] AT THR-283</scope>
    <scope>IDENTIFICATION BY MASS SPECTROMETRY [LARGE SCALE ANALYSIS]</scope>
    <source>
        <tissue>Kidney</tissue>
        <tissue>Testis</tissue>
    </source>
</reference>
<reference key="9">
    <citation type="journal article" date="2011" name="Mol. Biol. Cell">
        <title>Functional characterization of putative cilia genes by high-content analysis.</title>
        <authorList>
            <person name="Lai C.K."/>
            <person name="Gupta N."/>
            <person name="Wen X."/>
            <person name="Rangell L."/>
            <person name="Chih B."/>
            <person name="Peterson A.S."/>
            <person name="Bazan J.F."/>
            <person name="Li L."/>
            <person name="Scales S.J."/>
        </authorList>
    </citation>
    <scope>DISRUPTION PHENOTYPE</scope>
    <scope>FUNCTION</scope>
</reference>
<reference key="10">
    <citation type="journal article" date="2013" name="Exp. Cell Res.">
        <title>Interaction of mouse TTC30/DYF-1 with multiple intraflagellar transport complex B proteins and KIF17.</title>
        <authorList>
            <person name="Howard P.W."/>
            <person name="Jue S.F."/>
            <person name="Maurer R.A."/>
        </authorList>
    </citation>
    <scope>INTERACTION WITH IFT70B</scope>
</reference>
<reference key="11">
    <citation type="journal article" date="2014" name="PLoS Genet.">
        <title>A mutation in the mouse ttc26 gene leads to impaired hedgehog signaling.</title>
        <authorList>
            <person name="Swiderski R.E."/>
            <person name="Nakano Y."/>
            <person name="Mullins R.F."/>
            <person name="Seo S."/>
            <person name="Banfi B."/>
        </authorList>
    </citation>
    <scope>INTERACTION WITH IFT56</scope>
</reference>
<reference key="12">
    <citation type="journal article" date="2015" name="PLoS ONE">
        <title>Characterization of tetratricopeptide repeat-containing proteins critical for cilia formation and function.</title>
        <authorList>
            <person name="Xu Y."/>
            <person name="Cao J."/>
            <person name="Huang S."/>
            <person name="Feng D."/>
            <person name="Zhang W."/>
            <person name="Zhu X."/>
            <person name="Yan X."/>
        </authorList>
    </citation>
    <scope>INTERACTION WITH TTC25</scope>
</reference>
<feature type="chain" id="PRO_0000085517" description="Intraflagellar transport protein 46 homolog">
    <location>
        <begin position="1"/>
        <end position="301"/>
    </location>
</feature>
<feature type="region of interest" description="Disordered" evidence="1">
    <location>
        <begin position="1"/>
        <end position="66"/>
    </location>
</feature>
<feature type="compositionally biased region" description="Acidic residues" evidence="1">
    <location>
        <begin position="1"/>
        <end position="12"/>
    </location>
</feature>
<feature type="compositionally biased region" description="Acidic residues" evidence="1">
    <location>
        <begin position="30"/>
        <end position="52"/>
    </location>
</feature>
<feature type="modified residue" description="Phosphothreonine" evidence="11">
    <location>
        <position position="283"/>
    </location>
</feature>
<feature type="sequence conflict" description="In Ref. 1; CAB96545." evidence="10" ref="1">
    <original>PEFEELLGKVSLP</original>
    <variation>RNLKSSGKGESA</variation>
    <location>
        <begin position="213"/>
        <end position="225"/>
    </location>
</feature>
<feature type="sequence conflict" description="In Ref. 3; AAH10326." evidence="10" ref="3">
    <original>L</original>
    <variation>R</variation>
    <location>
        <position position="259"/>
    </location>
</feature>
<protein>
    <recommendedName>
        <fullName>Intraflagellar transport protein 46 homolog</fullName>
    </recommendedName>
</protein>
<gene>
    <name type="primary">Ift46</name>
</gene>
<dbReference type="EMBL" id="AJ249981">
    <property type="protein sequence ID" value="CAB96545.1"/>
    <property type="molecule type" value="mRNA"/>
</dbReference>
<dbReference type="EMBL" id="AK005360">
    <property type="protein sequence ID" value="BAB23974.1"/>
    <property type="molecule type" value="mRNA"/>
</dbReference>
<dbReference type="EMBL" id="AK032880">
    <property type="protein sequence ID" value="BAC28067.1"/>
    <property type="molecule type" value="mRNA"/>
</dbReference>
<dbReference type="EMBL" id="BC010326">
    <property type="protein sequence ID" value="AAH10326.1"/>
    <property type="molecule type" value="mRNA"/>
</dbReference>
<dbReference type="EMBL" id="BC080764">
    <property type="protein sequence ID" value="AAH80764.1"/>
    <property type="molecule type" value="mRNA"/>
</dbReference>
<dbReference type="CCDS" id="CCDS23119.1"/>
<dbReference type="RefSeq" id="NP_076320.2">
    <property type="nucleotide sequence ID" value="NM_023831.3"/>
</dbReference>
<dbReference type="RefSeq" id="XP_006510734.1">
    <property type="nucleotide sequence ID" value="XM_006510671.5"/>
</dbReference>
<dbReference type="RefSeq" id="XP_036011297.1">
    <property type="nucleotide sequence ID" value="XM_036155404.1"/>
</dbReference>
<dbReference type="SMR" id="Q9DB07"/>
<dbReference type="BioGRID" id="218181">
    <property type="interactions" value="3"/>
</dbReference>
<dbReference type="ComplexPortal" id="CPX-5028">
    <property type="entry name" value="Intraflagellar transport complex B"/>
</dbReference>
<dbReference type="FunCoup" id="Q9DB07">
    <property type="interactions" value="454"/>
</dbReference>
<dbReference type="IntAct" id="Q9DB07">
    <property type="interactions" value="1"/>
</dbReference>
<dbReference type="STRING" id="10090.ENSMUSP00000002099"/>
<dbReference type="TCDB" id="1.X.1.1.3">
    <property type="family name" value="the intraflagellar transporter-a complex (ift-a) family"/>
</dbReference>
<dbReference type="iPTMnet" id="Q9DB07"/>
<dbReference type="PhosphoSitePlus" id="Q9DB07"/>
<dbReference type="CPTAC" id="non-CPTAC-4041"/>
<dbReference type="PaxDb" id="10090-ENSMUSP00000002099"/>
<dbReference type="PeptideAtlas" id="Q9DB07"/>
<dbReference type="ProteomicsDB" id="266957"/>
<dbReference type="Pumba" id="Q9DB07"/>
<dbReference type="Antibodypedia" id="52642">
    <property type="antibodies" value="43 antibodies from 11 providers"/>
</dbReference>
<dbReference type="DNASU" id="76568"/>
<dbReference type="Ensembl" id="ENSMUST00000002099.11">
    <property type="protein sequence ID" value="ENSMUSP00000002099.4"/>
    <property type="gene ID" value="ENSMUSG00000002031.14"/>
</dbReference>
<dbReference type="Ensembl" id="ENSMUST00000118186.2">
    <property type="protein sequence ID" value="ENSMUSP00000113845.2"/>
    <property type="gene ID" value="ENSMUSG00000002031.14"/>
</dbReference>
<dbReference type="Ensembl" id="ENSMUST00000239014.2">
    <property type="protein sequence ID" value="ENSMUSP00000159011.2"/>
    <property type="gene ID" value="ENSMUSG00000002031.14"/>
</dbReference>
<dbReference type="GeneID" id="76568"/>
<dbReference type="KEGG" id="mmu:76568"/>
<dbReference type="UCSC" id="uc009pek.1">
    <property type="organism name" value="mouse"/>
</dbReference>
<dbReference type="AGR" id="MGI:1923818"/>
<dbReference type="CTD" id="56912"/>
<dbReference type="MGI" id="MGI:1923818">
    <property type="gene designation" value="Ift46"/>
</dbReference>
<dbReference type="VEuPathDB" id="HostDB:ENSMUSG00000002031"/>
<dbReference type="eggNOG" id="ENOG502QPNA">
    <property type="taxonomic scope" value="Eukaryota"/>
</dbReference>
<dbReference type="GeneTree" id="ENSGT00390000005544"/>
<dbReference type="HOGENOM" id="CLU_039364_1_0_1"/>
<dbReference type="InParanoid" id="Q9DB07"/>
<dbReference type="PhylomeDB" id="Q9DB07"/>
<dbReference type="TreeFam" id="TF314221"/>
<dbReference type="Reactome" id="R-MMU-5620924">
    <property type="pathway name" value="Intraflagellar transport"/>
</dbReference>
<dbReference type="BioGRID-ORCS" id="76568">
    <property type="hits" value="4 hits in 78 CRISPR screens"/>
</dbReference>
<dbReference type="ChiTaRS" id="Ift46">
    <property type="organism name" value="mouse"/>
</dbReference>
<dbReference type="PRO" id="PR:Q9DB07"/>
<dbReference type="Proteomes" id="UP000000589">
    <property type="component" value="Chromosome 9"/>
</dbReference>
<dbReference type="RNAct" id="Q9DB07">
    <property type="molecule type" value="protein"/>
</dbReference>
<dbReference type="Bgee" id="ENSMUSG00000002031">
    <property type="expression patterns" value="Expressed in spermatocyte and 265 other cell types or tissues"/>
</dbReference>
<dbReference type="ExpressionAtlas" id="Q9DB07">
    <property type="expression patterns" value="baseline and differential"/>
</dbReference>
<dbReference type="GO" id="GO:0005813">
    <property type="term" value="C:centrosome"/>
    <property type="evidence" value="ECO:0000314"/>
    <property type="project" value="MGI"/>
</dbReference>
<dbReference type="GO" id="GO:0097546">
    <property type="term" value="C:ciliary base"/>
    <property type="evidence" value="ECO:0000266"/>
    <property type="project" value="MGI"/>
</dbReference>
<dbReference type="GO" id="GO:0060170">
    <property type="term" value="C:ciliary membrane"/>
    <property type="evidence" value="ECO:0000266"/>
    <property type="project" value="MGI"/>
</dbReference>
<dbReference type="GO" id="GO:0005929">
    <property type="term" value="C:cilium"/>
    <property type="evidence" value="ECO:0000314"/>
    <property type="project" value="MGI"/>
</dbReference>
<dbReference type="GO" id="GO:0005737">
    <property type="term" value="C:cytoplasm"/>
    <property type="evidence" value="ECO:0007669"/>
    <property type="project" value="UniProtKB-KW"/>
</dbReference>
<dbReference type="GO" id="GO:0030992">
    <property type="term" value="C:intraciliary transport particle B"/>
    <property type="evidence" value="ECO:0000314"/>
    <property type="project" value="UniProtKB"/>
</dbReference>
<dbReference type="GO" id="GO:0031514">
    <property type="term" value="C:motile cilium"/>
    <property type="evidence" value="ECO:0000314"/>
    <property type="project" value="MGI"/>
</dbReference>
<dbReference type="GO" id="GO:0035082">
    <property type="term" value="P:axoneme assembly"/>
    <property type="evidence" value="ECO:0000266"/>
    <property type="project" value="MGI"/>
</dbReference>
<dbReference type="GO" id="GO:0060271">
    <property type="term" value="P:cilium assembly"/>
    <property type="evidence" value="ECO:0000315"/>
    <property type="project" value="MGI"/>
</dbReference>
<dbReference type="GO" id="GO:0044782">
    <property type="term" value="P:cilium organization"/>
    <property type="evidence" value="ECO:0000266"/>
    <property type="project" value="MGI"/>
</dbReference>
<dbReference type="GO" id="GO:0060285">
    <property type="term" value="P:cilium-dependent cell motility"/>
    <property type="evidence" value="ECO:0000266"/>
    <property type="project" value="MGI"/>
</dbReference>
<dbReference type="GO" id="GO:0035720">
    <property type="term" value="P:intraciliary anterograde transport"/>
    <property type="evidence" value="ECO:0000303"/>
    <property type="project" value="ComplexPortal"/>
</dbReference>
<dbReference type="GO" id="GO:0042073">
    <property type="term" value="P:intraciliary transport"/>
    <property type="evidence" value="ECO:0000305"/>
    <property type="project" value="MGI"/>
</dbReference>
<dbReference type="GO" id="GO:0015031">
    <property type="term" value="P:protein transport"/>
    <property type="evidence" value="ECO:0000266"/>
    <property type="project" value="MGI"/>
</dbReference>
<dbReference type="GO" id="GO:1902017">
    <property type="term" value="P:regulation of cilium assembly"/>
    <property type="evidence" value="ECO:0000266"/>
    <property type="project" value="MGI"/>
</dbReference>
<dbReference type="GO" id="GO:0031647">
    <property type="term" value="P:regulation of protein stability"/>
    <property type="evidence" value="ECO:0000266"/>
    <property type="project" value="MGI"/>
</dbReference>
<dbReference type="GO" id="GO:0007224">
    <property type="term" value="P:smoothened signaling pathway"/>
    <property type="evidence" value="ECO:0000315"/>
    <property type="project" value="MGI"/>
</dbReference>
<dbReference type="InterPro" id="IPR022088">
    <property type="entry name" value="Intraflagellar_transp_cmplxB"/>
</dbReference>
<dbReference type="PANTHER" id="PTHR13376">
    <property type="entry name" value="INTRAFLAGELLAR TRANSPORT PROTEIN 46 HOMOLOG"/>
    <property type="match status" value="1"/>
</dbReference>
<dbReference type="PANTHER" id="PTHR13376:SF0">
    <property type="entry name" value="INTRAFLAGELLAR TRANSPORT PROTEIN 46 HOMOLOG"/>
    <property type="match status" value="1"/>
</dbReference>
<dbReference type="Pfam" id="PF12317">
    <property type="entry name" value="IFT46_B_C"/>
    <property type="match status" value="1"/>
</dbReference>
<sequence>MADNSSDEYEEDNKEKKKPSQLTPQQGFSENDDDDDDDSSETDSDDDDDDEEHGAPLEGAYDPADYEHLPVSAEIKELFEYISRYTPQLIDLDHKLKPFIPDFIPAVGDIDAFLKVPRPDGKPDHLGLLVLDEPSTKQSDPTVLSLWLTENSKQHNITQHMKVKSLEDAEKNPKAIDTWIESISELHRSKPPATVHYTRPMPDIDTLMQEWSPEFEELLGKVSLPTVEIDCSLAEYIDMICAILDIPFYKSRIQSLHLLFSLYSEFKNSQHFKALAEGKKVFTPPPNSASQAGDAETLTFI</sequence>
<proteinExistence type="evidence at protein level"/>
<keyword id="KW-0966">Cell projection</keyword>
<keyword id="KW-0969">Cilium</keyword>
<keyword id="KW-0963">Cytoplasm</keyword>
<keyword id="KW-0206">Cytoskeleton</keyword>
<keyword id="KW-0597">Phosphoprotein</keyword>
<keyword id="KW-1185">Reference proteome</keyword>
<name>IFT46_MOUSE</name>
<organism>
    <name type="scientific">Mus musculus</name>
    <name type="common">Mouse</name>
    <dbReference type="NCBI Taxonomy" id="10090"/>
    <lineage>
        <taxon>Eukaryota</taxon>
        <taxon>Metazoa</taxon>
        <taxon>Chordata</taxon>
        <taxon>Craniata</taxon>
        <taxon>Vertebrata</taxon>
        <taxon>Euteleostomi</taxon>
        <taxon>Mammalia</taxon>
        <taxon>Eutheria</taxon>
        <taxon>Euarchontoglires</taxon>
        <taxon>Glires</taxon>
        <taxon>Rodentia</taxon>
        <taxon>Myomorpha</taxon>
        <taxon>Muroidea</taxon>
        <taxon>Muridae</taxon>
        <taxon>Murinae</taxon>
        <taxon>Mus</taxon>
        <taxon>Mus</taxon>
    </lineage>
</organism>
<accession>Q9DB07</accession>
<accession>Q91Z06</accession>
<accession>Q9JHT1</accession>
<evidence type="ECO:0000256" key="1">
    <source>
        <dbReference type="SAM" id="MobiDB-lite"/>
    </source>
</evidence>
<evidence type="ECO:0000269" key="2">
    <source>
    </source>
</evidence>
<evidence type="ECO:0000269" key="3">
    <source>
    </source>
</evidence>
<evidence type="ECO:0000269" key="4">
    <source>
    </source>
</evidence>
<evidence type="ECO:0000269" key="5">
    <source>
    </source>
</evidence>
<evidence type="ECO:0000269" key="6">
    <source>
    </source>
</evidence>
<evidence type="ECO:0000269" key="7">
    <source>
    </source>
</evidence>
<evidence type="ECO:0000269" key="8">
    <source>
    </source>
</evidence>
<evidence type="ECO:0000269" key="9">
    <source>
    </source>
</evidence>
<evidence type="ECO:0000305" key="10"/>
<evidence type="ECO:0007744" key="11">
    <source>
    </source>
</evidence>
<comment type="function">
    <text evidence="3 6">Forms part of a complex involved in intraflagellar transport (IFT), the bi-directional movement of particles required for the assembly, maintenance and functioning of primary cilia. May play a role in chondrocyte maturation and skeletogenesis.</text>
</comment>
<comment type="subunit">
    <text evidence="2 4 5 7 8 9">Component of the IFT complex B, at least composed of IFT20, IFT22, IFT25, IFT27, IFT46, IFT52, TRAF3IP1/IFT54, IFT57, IFT74, IFT80, IFT81, and IFT88. Interacts with IFT57, IFT88 and DAW1. Interacts with ARL13B. Interacts with IFT56. Interacts with TTC25 (PubMed:25860617). Interacts with IFT70B (PubMed:23810713).</text>
</comment>
<comment type="subcellular location">
    <subcellularLocation>
        <location>Cytoplasm</location>
        <location>Cytoskeleton</location>
        <location>Cilium basal body</location>
    </subcellularLocation>
    <subcellularLocation>
        <location>Cell projection</location>
        <location>Cilium</location>
    </subcellularLocation>
    <text>Expression is concentrated at the cilium basal body but is also detected along the length of the cilium.</text>
</comment>
<comment type="tissue specificity">
    <text evidence="3">Strongly expressed in ovary and testis, moderately expressed in kidney and brain, and weakly expressed in thymus, heart, lung, liver, spleen and muscle. Expressed in embryonic bone and cartilage, with high expression in non-hypertrophic chondrocytes and weaker expression in hypertrophic chondrocytes.</text>
</comment>
<comment type="developmental stage">
    <text evidence="3">Expressed from 8 dpc throughout embryonic development, with levels increasing at 12.5 dpc and remaining constant thereafter. Up-regulated during chondrocyte maturation and skeletogenesis.</text>
</comment>
<comment type="induction">
    <text evidence="3">By BMP2.</text>
</comment>
<comment type="disruption phenotype">
    <text evidence="6">Short cilia.</text>
</comment>
<comment type="similarity">
    <text evidence="10">Belongs to the IFT46 family.</text>
</comment>